<feature type="chain" id="PRO_0000438151" description="DNA (cytosine-5)-methyltransferase DRM1A">
    <location>
        <begin position="1"/>
        <end position="473"/>
    </location>
</feature>
<feature type="domain" description="UBA 1" evidence="2">
    <location>
        <begin position="20"/>
        <end position="61"/>
    </location>
</feature>
<feature type="domain" description="UBA 2" evidence="2">
    <location>
        <begin position="120"/>
        <end position="140"/>
    </location>
</feature>
<feature type="domain" description="SAM-dependent MTase DRM-type" evidence="3">
    <location>
        <begin position="204"/>
        <end position="431"/>
    </location>
</feature>
<feature type="region of interest" description="Disordered" evidence="4">
    <location>
        <begin position="84"/>
        <end position="115"/>
    </location>
</feature>
<feature type="compositionally biased region" description="Acidic residues" evidence="4">
    <location>
        <begin position="84"/>
        <end position="101"/>
    </location>
</feature>
<sequence length="473" mass="53163">MRIASSSGILMDANGKANGSAPSALVAYFLGMGFSREMVFRAIKEIGDTDSEQILELLLTYQAIGSDPSVGNSSHSACDPQILEEEDEEEDVNWDEDDTVDNFDRATYSDGSGDEDFLQEMSEKDEKIKSLVSMGFPEDEDTEFSSFGGRKKTKLIDGSKKKRERYRSRPQWNQVPFDGSHEEPMPLPNSMVGFSLPNDGLRSVHRNLPDQALGPPFFYYENVALAPKGVWTTISRFLYDIYPEFVYSKYFCAAARKRGYIHNLPIKNRNYTRGVSRTARYRALGNSFQVDTVAYHLSVLRDIFPNGMNVLSLFSGIGGAEVALHRLGICMKTVVLVEISEVNMTLLRSWWDQTQTGTLIEIADVQNLTAERIELFIRRFGGFDLVIGGSPCNNLAGSNRYHRDGLEGKHSALFYHYYRILDSVKTIMASIFGAKGKLFRHVRKALLLKQSSSLTLKTEQDPSNNSDKDSMDK</sequence>
<accession>Q2RBJ4</accession>
<accession>A0A0P0XY10</accession>
<accession>D2KY68</accession>
<gene>
    <name evidence="5" type="primary">DRM1A</name>
    <name evidence="8" type="ordered locus">Os11g0109200</name>
    <name evidence="7" type="ordered locus">LOC_Os11g01810</name>
</gene>
<evidence type="ECO:0000250" key="1">
    <source>
        <dbReference type="UniProtKB" id="Q10SU5"/>
    </source>
</evidence>
<evidence type="ECO:0000255" key="2">
    <source>
        <dbReference type="PROSITE-ProRule" id="PRU00212"/>
    </source>
</evidence>
<evidence type="ECO:0000255" key="3">
    <source>
        <dbReference type="PROSITE-ProRule" id="PRU01017"/>
    </source>
</evidence>
<evidence type="ECO:0000256" key="4">
    <source>
        <dbReference type="SAM" id="MobiDB-lite"/>
    </source>
</evidence>
<evidence type="ECO:0000303" key="5">
    <source>
    </source>
</evidence>
<evidence type="ECO:0000305" key="6"/>
<evidence type="ECO:0000312" key="7">
    <source>
        <dbReference type="EMBL" id="ABA91139.1"/>
    </source>
</evidence>
<evidence type="ECO:0000312" key="8">
    <source>
        <dbReference type="EMBL" id="BAH95035.1"/>
    </source>
</evidence>
<dbReference type="EC" id="2.1.1.37" evidence="6"/>
<dbReference type="EMBL" id="DP000010">
    <property type="protein sequence ID" value="ABA91139.1"/>
    <property type="molecule type" value="Genomic_DNA"/>
</dbReference>
<dbReference type="EMBL" id="AP008217">
    <property type="protein sequence ID" value="BAH95035.1"/>
    <property type="molecule type" value="Genomic_DNA"/>
</dbReference>
<dbReference type="EMBL" id="AP014967">
    <property type="protein sequence ID" value="BAT12347.1"/>
    <property type="status" value="ALT_SEQ"/>
    <property type="molecule type" value="Genomic_DNA"/>
</dbReference>
<dbReference type="EMBL" id="AB524356">
    <property type="protein sequence ID" value="BAI66066.1"/>
    <property type="molecule type" value="mRNA"/>
</dbReference>
<dbReference type="SMR" id="Q2RBJ4"/>
<dbReference type="FunCoup" id="Q2RBJ4">
    <property type="interactions" value="707"/>
</dbReference>
<dbReference type="STRING" id="39947.Q2RBJ4"/>
<dbReference type="PaxDb" id="39947-Q2RBJ4"/>
<dbReference type="KEGG" id="dosa:Os11g0109200"/>
<dbReference type="eggNOG" id="ENOG502QVZV">
    <property type="taxonomic scope" value="Eukaryota"/>
</dbReference>
<dbReference type="InParanoid" id="Q2RBJ4"/>
<dbReference type="Proteomes" id="UP000000763">
    <property type="component" value="Chromosome 11"/>
</dbReference>
<dbReference type="Proteomes" id="UP000059680">
    <property type="component" value="Chromosome 11"/>
</dbReference>
<dbReference type="GO" id="GO:0005634">
    <property type="term" value="C:nucleus"/>
    <property type="evidence" value="ECO:0000318"/>
    <property type="project" value="GO_Central"/>
</dbReference>
<dbReference type="GO" id="GO:0003886">
    <property type="term" value="F:DNA (cytosine-5-)-methyltransferase activity"/>
    <property type="evidence" value="ECO:0000318"/>
    <property type="project" value="GO_Central"/>
</dbReference>
<dbReference type="GO" id="GO:0003677">
    <property type="term" value="F:DNA binding"/>
    <property type="evidence" value="ECO:0007669"/>
    <property type="project" value="UniProtKB-KW"/>
</dbReference>
<dbReference type="GO" id="GO:0032259">
    <property type="term" value="P:methylation"/>
    <property type="evidence" value="ECO:0007669"/>
    <property type="project" value="UniProtKB-KW"/>
</dbReference>
<dbReference type="Gene3D" id="1.10.8.10">
    <property type="entry name" value="DNA helicase RuvA subunit, C-terminal domain"/>
    <property type="match status" value="1"/>
</dbReference>
<dbReference type="Gene3D" id="3.40.50.150">
    <property type="entry name" value="Vaccinia Virus protein VP39"/>
    <property type="match status" value="2"/>
</dbReference>
<dbReference type="InterPro" id="IPR001525">
    <property type="entry name" value="C5_MeTfrase"/>
</dbReference>
<dbReference type="InterPro" id="IPR029063">
    <property type="entry name" value="SAM-dependent_MTases_sf"/>
</dbReference>
<dbReference type="InterPro" id="IPR030380">
    <property type="entry name" value="SAM_MeTfrase_DRM"/>
</dbReference>
<dbReference type="PANTHER" id="PTHR23068:SF25">
    <property type="entry name" value="DNA (CYTOSINE-5)-METHYLTRANSFERASE DRM2"/>
    <property type="match status" value="1"/>
</dbReference>
<dbReference type="PANTHER" id="PTHR23068">
    <property type="entry name" value="DNA CYTOSINE-5- -METHYLTRANSFERASE 3-RELATED"/>
    <property type="match status" value="1"/>
</dbReference>
<dbReference type="Pfam" id="PF00145">
    <property type="entry name" value="DNA_methylase"/>
    <property type="match status" value="1"/>
</dbReference>
<dbReference type="SUPFAM" id="SSF53335">
    <property type="entry name" value="S-adenosyl-L-methionine-dependent methyltransferases"/>
    <property type="match status" value="2"/>
</dbReference>
<dbReference type="PROSITE" id="PS51680">
    <property type="entry name" value="SAM_MT_DRM"/>
    <property type="match status" value="1"/>
</dbReference>
<protein>
    <recommendedName>
        <fullName evidence="6">DNA (cytosine-5)-methyltransferase DRM1A</fullName>
        <ecNumber evidence="6">2.1.1.37</ecNumber>
    </recommendedName>
    <alternativeName>
        <fullName evidence="6">Protein DOMAINS REARRANGED METHYLASE 1A</fullName>
        <shortName evidence="5">OsDRM1A</shortName>
    </alternativeName>
</protein>
<organism>
    <name type="scientific">Oryza sativa subsp. japonica</name>
    <name type="common">Rice</name>
    <dbReference type="NCBI Taxonomy" id="39947"/>
    <lineage>
        <taxon>Eukaryota</taxon>
        <taxon>Viridiplantae</taxon>
        <taxon>Streptophyta</taxon>
        <taxon>Embryophyta</taxon>
        <taxon>Tracheophyta</taxon>
        <taxon>Spermatophyta</taxon>
        <taxon>Magnoliopsida</taxon>
        <taxon>Liliopsida</taxon>
        <taxon>Poales</taxon>
        <taxon>Poaceae</taxon>
        <taxon>BOP clade</taxon>
        <taxon>Oryzoideae</taxon>
        <taxon>Oryzeae</taxon>
        <taxon>Oryzinae</taxon>
        <taxon>Oryza</taxon>
        <taxon>Oryza sativa</taxon>
    </lineage>
</organism>
<keyword id="KW-0238">DNA-binding</keyword>
<keyword id="KW-0489">Methyltransferase</keyword>
<keyword id="KW-0539">Nucleus</keyword>
<keyword id="KW-1185">Reference proteome</keyword>
<keyword id="KW-0677">Repeat</keyword>
<keyword id="KW-0949">S-adenosyl-L-methionine</keyword>
<keyword id="KW-0808">Transferase</keyword>
<comment type="function">
    <text evidence="1">Involved in de novo DNA methylation. Involved in RNA-directed DNA methylation (RdDM).</text>
</comment>
<comment type="catalytic activity">
    <reaction evidence="3">
        <text>a 2'-deoxycytidine in DNA + S-adenosyl-L-methionine = a 5-methyl-2'-deoxycytidine in DNA + S-adenosyl-L-homocysteine + H(+)</text>
        <dbReference type="Rhea" id="RHEA:13681"/>
        <dbReference type="Rhea" id="RHEA-COMP:11369"/>
        <dbReference type="Rhea" id="RHEA-COMP:11370"/>
        <dbReference type="ChEBI" id="CHEBI:15378"/>
        <dbReference type="ChEBI" id="CHEBI:57856"/>
        <dbReference type="ChEBI" id="CHEBI:59789"/>
        <dbReference type="ChEBI" id="CHEBI:85452"/>
        <dbReference type="ChEBI" id="CHEBI:85454"/>
        <dbReference type="EC" id="2.1.1.37"/>
    </reaction>
</comment>
<comment type="subcellular location">
    <subcellularLocation>
        <location evidence="6">Nucleus</location>
    </subcellularLocation>
</comment>
<comment type="similarity">
    <text evidence="3">Belongs to the class I-like SAM-binding methyltransferase superfamily. DRM-methyltransferase family.</text>
</comment>
<comment type="sequence caution" evidence="6">
    <conflict type="erroneous gene model prediction">
        <sequence resource="EMBL-CDS" id="BAT12347"/>
    </conflict>
</comment>
<proteinExistence type="evidence at transcript level"/>
<name>DRM1A_ORYSJ</name>
<reference key="1">
    <citation type="journal article" date="2005" name="BMC Biol.">
        <title>The sequence of rice chromosomes 11 and 12, rich in disease resistance genes and recent gene duplications.</title>
        <authorList>
            <consortium name="The rice chromosomes 11 and 12 sequencing consortia"/>
        </authorList>
    </citation>
    <scope>NUCLEOTIDE SEQUENCE [LARGE SCALE GENOMIC DNA]</scope>
    <source>
        <strain>cv. Nipponbare</strain>
    </source>
</reference>
<reference key="2">
    <citation type="journal article" date="2005" name="Nature">
        <title>The map-based sequence of the rice genome.</title>
        <authorList>
            <consortium name="International rice genome sequencing project (IRGSP)"/>
        </authorList>
    </citation>
    <scope>NUCLEOTIDE SEQUENCE [LARGE SCALE GENOMIC DNA]</scope>
    <source>
        <strain>cv. Nipponbare</strain>
    </source>
</reference>
<reference key="3">
    <citation type="journal article" date="2008" name="Nucleic Acids Res.">
        <title>The rice annotation project database (RAP-DB): 2008 update.</title>
        <authorList>
            <consortium name="The rice annotation project (RAP)"/>
        </authorList>
    </citation>
    <scope>GENOME REANNOTATION</scope>
    <source>
        <strain>cv. Nipponbare</strain>
    </source>
</reference>
<reference key="4">
    <citation type="journal article" date="2013" name="Rice">
        <title>Improvement of the Oryza sativa Nipponbare reference genome using next generation sequence and optical map data.</title>
        <authorList>
            <person name="Kawahara Y."/>
            <person name="de la Bastide M."/>
            <person name="Hamilton J.P."/>
            <person name="Kanamori H."/>
            <person name="McCombie W.R."/>
            <person name="Ouyang S."/>
            <person name="Schwartz D.C."/>
            <person name="Tanaka T."/>
            <person name="Wu J."/>
            <person name="Zhou S."/>
            <person name="Childs K.L."/>
            <person name="Davidson R.M."/>
            <person name="Lin H."/>
            <person name="Quesada-Ocampo L."/>
            <person name="Vaillancourt B."/>
            <person name="Sakai H."/>
            <person name="Lee S.S."/>
            <person name="Kim J."/>
            <person name="Numa H."/>
            <person name="Itoh T."/>
            <person name="Buell C.R."/>
            <person name="Matsumoto T."/>
        </authorList>
    </citation>
    <scope>GENOME REANNOTATION</scope>
    <source>
        <strain>cv. Nipponbare</strain>
    </source>
</reference>
<reference key="5">
    <citation type="journal article" date="2012" name="Plant J.">
        <title>Targeted disruption of an orthologue of DOMAINS REARRANGED METHYLASE 2, OsDRM2, impairs the growth of rice plants by abnormal DNA methylation.</title>
        <authorList>
            <person name="Moritoh S."/>
            <person name="Eun C.H."/>
            <person name="Ono A."/>
            <person name="Asao H."/>
            <person name="Okano Y."/>
            <person name="Yamaguchi K."/>
            <person name="Shimatani Z."/>
            <person name="Koizumi A."/>
            <person name="Terada R."/>
        </authorList>
    </citation>
    <scope>NUCLEOTIDE SEQUENCE [MRNA] OF 164-352</scope>
    <source>
        <strain>cv. Nipponbare</strain>
        <tissue>Leaf blade</tissue>
    </source>
</reference>